<accession>P33228</accession>
<accession>P76849</accession>
<proteinExistence type="evidence at protein level"/>
<protein>
    <recommendedName>
        <fullName>Protein RecT</fullName>
    </recommendedName>
    <alternativeName>
        <fullName>P33</fullName>
    </alternativeName>
</protein>
<reference key="1">
    <citation type="journal article" date="1993" name="J. Bacteriol.">
        <title>Genetic and molecular analyses of the C-terminal region of the recE gene from the Rac prophage of Escherichia coli K-12 reveal the recT gene.</title>
        <authorList>
            <person name="Clark A.J."/>
            <person name="Sharma V."/>
            <person name="Brenowitz S."/>
            <person name="Chu C.C."/>
            <person name="Sandler S.J."/>
            <person name="Satin L."/>
            <person name="Templin A."/>
            <person name="Berger I."/>
            <person name="Cohen A."/>
        </authorList>
    </citation>
    <scope>NUCLEOTIDE SEQUENCE [GENOMIC DNA]</scope>
    <source>
        <strain>K12</strain>
    </source>
</reference>
<reference key="2">
    <citation type="journal article" date="1996" name="DNA Res.">
        <title>A 570-kb DNA sequence of the Escherichia coli K-12 genome corresponding to the 28.0-40.1 min region on the linkage map.</title>
        <authorList>
            <person name="Aiba H."/>
            <person name="Baba T."/>
            <person name="Fujita K."/>
            <person name="Hayashi K."/>
            <person name="Inada T."/>
            <person name="Isono K."/>
            <person name="Itoh T."/>
            <person name="Kasai H."/>
            <person name="Kashimoto K."/>
            <person name="Kimura S."/>
            <person name="Kitakawa M."/>
            <person name="Kitagawa M."/>
            <person name="Makino K."/>
            <person name="Miki T."/>
            <person name="Mizobuchi K."/>
            <person name="Mori H."/>
            <person name="Mori T."/>
            <person name="Motomura K."/>
            <person name="Nakade S."/>
            <person name="Nakamura Y."/>
            <person name="Nashimoto H."/>
            <person name="Nishio Y."/>
            <person name="Oshima T."/>
            <person name="Saito N."/>
            <person name="Sampei G."/>
            <person name="Seki Y."/>
            <person name="Sivasundaram S."/>
            <person name="Tagami H."/>
            <person name="Takeda J."/>
            <person name="Takemoto K."/>
            <person name="Takeuchi Y."/>
            <person name="Wada C."/>
            <person name="Yamamoto Y."/>
            <person name="Horiuchi T."/>
        </authorList>
    </citation>
    <scope>NUCLEOTIDE SEQUENCE [LARGE SCALE GENOMIC DNA]</scope>
    <source>
        <strain>K12 / W3110 / ATCC 27325 / DSM 5911</strain>
    </source>
</reference>
<reference key="3">
    <citation type="journal article" date="1997" name="Science">
        <title>The complete genome sequence of Escherichia coli K-12.</title>
        <authorList>
            <person name="Blattner F.R."/>
            <person name="Plunkett G. III"/>
            <person name="Bloch C.A."/>
            <person name="Perna N.T."/>
            <person name="Burland V."/>
            <person name="Riley M."/>
            <person name="Collado-Vides J."/>
            <person name="Glasner J.D."/>
            <person name="Rode C.K."/>
            <person name="Mayhew G.F."/>
            <person name="Gregor J."/>
            <person name="Davis N.W."/>
            <person name="Kirkpatrick H.A."/>
            <person name="Goeden M.A."/>
            <person name="Rose D.J."/>
            <person name="Mau B."/>
            <person name="Shao Y."/>
        </authorList>
    </citation>
    <scope>NUCLEOTIDE SEQUENCE [LARGE SCALE GENOMIC DNA]</scope>
    <source>
        <strain>K12 / MG1655 / ATCC 47076</strain>
    </source>
</reference>
<reference key="4">
    <citation type="journal article" date="2006" name="Mol. Syst. Biol.">
        <title>Highly accurate genome sequences of Escherichia coli K-12 strains MG1655 and W3110.</title>
        <authorList>
            <person name="Hayashi K."/>
            <person name="Morooka N."/>
            <person name="Yamamoto Y."/>
            <person name="Fujita K."/>
            <person name="Isono K."/>
            <person name="Choi S."/>
            <person name="Ohtsubo E."/>
            <person name="Baba T."/>
            <person name="Wanner B.L."/>
            <person name="Mori H."/>
            <person name="Horiuchi T."/>
        </authorList>
    </citation>
    <scope>NUCLEOTIDE SEQUENCE [LARGE SCALE GENOMIC DNA]</scope>
    <source>
        <strain>K12 / W3110 / ATCC 27325 / DSM 5911</strain>
    </source>
</reference>
<reference key="5">
    <citation type="journal article" date="1993" name="J. Bacteriol.">
        <title>Identification and characterization of the Escherichia coli RecT protein, a protein encoded by the recE region that promotes renaturation of homologous single-stranded DNA.</title>
        <authorList>
            <person name="Hall S.D."/>
            <person name="Kane M.F."/>
            <person name="Kolodner R.D."/>
        </authorList>
    </citation>
    <scope>CHARACTERIZATION</scope>
    <scope>PARTIAL PROTEIN SEQUENCE</scope>
</reference>
<reference key="6">
    <citation type="journal article" date="1993" name="J. Bacteriol.">
        <authorList>
            <person name="Hall S.D."/>
            <person name="Kane M.F."/>
            <person name="Kolodner R.D."/>
        </authorList>
    </citation>
    <scope>ERRATUM OF PUBMED:8416902</scope>
</reference>
<dbReference type="EMBL" id="L23927">
    <property type="protein sequence ID" value="AAA16179.1"/>
    <property type="molecule type" value="Unassigned_DNA"/>
</dbReference>
<dbReference type="EMBL" id="U00096">
    <property type="protein sequence ID" value="AAC74431.1"/>
    <property type="molecule type" value="Genomic_DNA"/>
</dbReference>
<dbReference type="EMBL" id="AP009048">
    <property type="protein sequence ID" value="BAA14949.1"/>
    <property type="molecule type" value="Genomic_DNA"/>
</dbReference>
<dbReference type="PIR" id="I69516">
    <property type="entry name" value="I69516"/>
</dbReference>
<dbReference type="RefSeq" id="NP_415865.1">
    <property type="nucleotide sequence ID" value="NC_000913.3"/>
</dbReference>
<dbReference type="RefSeq" id="WP_000166319.1">
    <property type="nucleotide sequence ID" value="NZ_JACEFS010000049.1"/>
</dbReference>
<dbReference type="BMRB" id="P33228"/>
<dbReference type="SMR" id="P33228"/>
<dbReference type="BioGRID" id="4260162">
    <property type="interactions" value="69"/>
</dbReference>
<dbReference type="DIP" id="DIP-10657N"/>
<dbReference type="FunCoup" id="P33228">
    <property type="interactions" value="217"/>
</dbReference>
<dbReference type="IntAct" id="P33228">
    <property type="interactions" value="9"/>
</dbReference>
<dbReference type="STRING" id="511145.b1349"/>
<dbReference type="PaxDb" id="511145-b1349"/>
<dbReference type="EnsemblBacteria" id="AAC74431">
    <property type="protein sequence ID" value="AAC74431"/>
    <property type="gene ID" value="b1349"/>
</dbReference>
<dbReference type="GeneID" id="86946556"/>
<dbReference type="GeneID" id="945917"/>
<dbReference type="KEGG" id="ecj:JW1343"/>
<dbReference type="KEGG" id="eco:b1349"/>
<dbReference type="KEGG" id="ecoc:C3026_07900"/>
<dbReference type="PATRIC" id="fig|1411691.4.peg.928"/>
<dbReference type="EchoBASE" id="EB1844"/>
<dbReference type="eggNOG" id="COG3723">
    <property type="taxonomic scope" value="Bacteria"/>
</dbReference>
<dbReference type="HOGENOM" id="CLU_071046_0_0_6"/>
<dbReference type="InParanoid" id="P33228"/>
<dbReference type="OMA" id="IGYKGMI"/>
<dbReference type="OrthoDB" id="5124088at2"/>
<dbReference type="PhylomeDB" id="P33228"/>
<dbReference type="BioCyc" id="EcoCyc:EG11899-MONOMER"/>
<dbReference type="PRO" id="PR:P33228"/>
<dbReference type="Proteomes" id="UP000000625">
    <property type="component" value="Chromosome"/>
</dbReference>
<dbReference type="GO" id="GO:0032993">
    <property type="term" value="C:protein-DNA complex"/>
    <property type="evidence" value="ECO:0000314"/>
    <property type="project" value="EcoCyc"/>
</dbReference>
<dbReference type="GO" id="GO:0003677">
    <property type="term" value="F:DNA binding"/>
    <property type="evidence" value="ECO:0000314"/>
    <property type="project" value="EcoCyc"/>
</dbReference>
<dbReference type="GO" id="GO:0003697">
    <property type="term" value="F:single-stranded DNA binding"/>
    <property type="evidence" value="ECO:0000314"/>
    <property type="project" value="EcoCyc"/>
</dbReference>
<dbReference type="GO" id="GO:0006310">
    <property type="term" value="P:DNA recombination"/>
    <property type="evidence" value="ECO:0007669"/>
    <property type="project" value="UniProtKB-KW"/>
</dbReference>
<dbReference type="InterPro" id="IPR018330">
    <property type="entry name" value="RecT_fam"/>
</dbReference>
<dbReference type="InterPro" id="IPR004590">
    <property type="entry name" value="ssDNA_annealing_RecT"/>
</dbReference>
<dbReference type="NCBIfam" id="NF007351">
    <property type="entry name" value="PRK09846.1"/>
    <property type="match status" value="1"/>
</dbReference>
<dbReference type="NCBIfam" id="TIGR00616">
    <property type="entry name" value="rect"/>
    <property type="match status" value="1"/>
</dbReference>
<dbReference type="Pfam" id="PF03837">
    <property type="entry name" value="RecT"/>
    <property type="match status" value="1"/>
</dbReference>
<name>RECT_ECOLI</name>
<keyword id="KW-0903">Direct protein sequencing</keyword>
<keyword id="KW-0233">DNA recombination</keyword>
<keyword id="KW-0238">DNA-binding</keyword>
<keyword id="KW-1185">Reference proteome</keyword>
<sequence>MTKQPPIAKADLQKTQGNRAPAAVKNSDVISFINQPSMKEQLAAALPRHMTAERMIRIATTEIRKVPALGNCDTMSFVSAIVQCSQLGLEPGSALGHAYLLPFGNKNEKSGKKNVQLIIGYRGMIDLARRSGQIASLSARVVREGDEFSFEFGLDEKLIHRPGENEDAPVTHVYAVARLKDGGTQFEVMTRKQIELVRSLSKAGNNGPWVTHWEEMAKKTAIRRLFKYLPVSIEIQRAVSMDEKEPLTIDPADSSVLTGEYSVIDNSEE</sequence>
<comment type="function">
    <text>Binds to single-stranded DNA and also promotes the renaturation of complementary single-stranded DNA. Function in recombination. Has a function similar to that of lambda RedB.</text>
</comment>
<comment type="subunit">
    <text>Homotetramer.</text>
</comment>
<feature type="chain" id="PRO_0000097233" description="Protein RecT">
    <location>
        <begin position="1"/>
        <end position="269"/>
    </location>
</feature>
<organism>
    <name type="scientific">Escherichia coli (strain K12)</name>
    <dbReference type="NCBI Taxonomy" id="83333"/>
    <lineage>
        <taxon>Bacteria</taxon>
        <taxon>Pseudomonadati</taxon>
        <taxon>Pseudomonadota</taxon>
        <taxon>Gammaproteobacteria</taxon>
        <taxon>Enterobacterales</taxon>
        <taxon>Enterobacteriaceae</taxon>
        <taxon>Escherichia</taxon>
    </lineage>
</organism>
<gene>
    <name type="primary">recT</name>
    <name type="ordered locus">b1349</name>
    <name type="ordered locus">JW1343</name>
</gene>